<dbReference type="EC" id="2.3.1.37"/>
<dbReference type="EMBL" id="CP000087">
    <property type="protein sequence ID" value="ABE04712.1"/>
    <property type="molecule type" value="Genomic_DNA"/>
</dbReference>
<dbReference type="RefSeq" id="WP_011477300.1">
    <property type="nucleotide sequence ID" value="NC_007940.1"/>
</dbReference>
<dbReference type="SMR" id="Q1RIV2"/>
<dbReference type="KEGG" id="rbe:RBE_0631"/>
<dbReference type="eggNOG" id="COG0156">
    <property type="taxonomic scope" value="Bacteria"/>
</dbReference>
<dbReference type="HOGENOM" id="CLU_015846_11_1_5"/>
<dbReference type="OrthoDB" id="9807157at2"/>
<dbReference type="UniPathway" id="UPA00251">
    <property type="reaction ID" value="UER00375"/>
</dbReference>
<dbReference type="Proteomes" id="UP000001951">
    <property type="component" value="Chromosome"/>
</dbReference>
<dbReference type="GO" id="GO:0003870">
    <property type="term" value="F:5-aminolevulinate synthase activity"/>
    <property type="evidence" value="ECO:0007669"/>
    <property type="project" value="UniProtKB-EC"/>
</dbReference>
<dbReference type="GO" id="GO:0030170">
    <property type="term" value="F:pyridoxal phosphate binding"/>
    <property type="evidence" value="ECO:0007669"/>
    <property type="project" value="InterPro"/>
</dbReference>
<dbReference type="GO" id="GO:0006782">
    <property type="term" value="P:protoporphyrinogen IX biosynthetic process"/>
    <property type="evidence" value="ECO:0007669"/>
    <property type="project" value="UniProtKB-UniPathway"/>
</dbReference>
<dbReference type="CDD" id="cd06454">
    <property type="entry name" value="KBL_like"/>
    <property type="match status" value="1"/>
</dbReference>
<dbReference type="FunFam" id="3.40.640.10:FF:000006">
    <property type="entry name" value="5-aminolevulinate synthase, mitochondrial"/>
    <property type="match status" value="1"/>
</dbReference>
<dbReference type="Gene3D" id="3.90.1150.10">
    <property type="entry name" value="Aspartate Aminotransferase, domain 1"/>
    <property type="match status" value="1"/>
</dbReference>
<dbReference type="Gene3D" id="3.40.640.10">
    <property type="entry name" value="Type I PLP-dependent aspartate aminotransferase-like (Major domain)"/>
    <property type="match status" value="1"/>
</dbReference>
<dbReference type="InterPro" id="IPR010961">
    <property type="entry name" value="4pyrrol_synth_NH2levulA_synth"/>
</dbReference>
<dbReference type="InterPro" id="IPR001917">
    <property type="entry name" value="Aminotrans_II_pyridoxalP_BS"/>
</dbReference>
<dbReference type="InterPro" id="IPR004839">
    <property type="entry name" value="Aminotransferase_I/II_large"/>
</dbReference>
<dbReference type="InterPro" id="IPR050087">
    <property type="entry name" value="AON_synthase_class-II"/>
</dbReference>
<dbReference type="InterPro" id="IPR015424">
    <property type="entry name" value="PyrdxlP-dep_Trfase"/>
</dbReference>
<dbReference type="InterPro" id="IPR015421">
    <property type="entry name" value="PyrdxlP-dep_Trfase_major"/>
</dbReference>
<dbReference type="InterPro" id="IPR015422">
    <property type="entry name" value="PyrdxlP-dep_Trfase_small"/>
</dbReference>
<dbReference type="NCBIfam" id="TIGR01821">
    <property type="entry name" value="5aminolev_synth"/>
    <property type="match status" value="1"/>
</dbReference>
<dbReference type="PANTHER" id="PTHR13693:SF102">
    <property type="entry name" value="2-AMINO-3-KETOBUTYRATE COENZYME A LIGASE, MITOCHONDRIAL"/>
    <property type="match status" value="1"/>
</dbReference>
<dbReference type="PANTHER" id="PTHR13693">
    <property type="entry name" value="CLASS II AMINOTRANSFERASE/8-AMINO-7-OXONONANOATE SYNTHASE"/>
    <property type="match status" value="1"/>
</dbReference>
<dbReference type="Pfam" id="PF00155">
    <property type="entry name" value="Aminotran_1_2"/>
    <property type="match status" value="1"/>
</dbReference>
<dbReference type="SUPFAM" id="SSF53383">
    <property type="entry name" value="PLP-dependent transferases"/>
    <property type="match status" value="1"/>
</dbReference>
<dbReference type="PROSITE" id="PS00599">
    <property type="entry name" value="AA_TRANSFER_CLASS_2"/>
    <property type="match status" value="1"/>
</dbReference>
<organism>
    <name type="scientific">Rickettsia bellii (strain RML369-C)</name>
    <dbReference type="NCBI Taxonomy" id="336407"/>
    <lineage>
        <taxon>Bacteria</taxon>
        <taxon>Pseudomonadati</taxon>
        <taxon>Pseudomonadota</taxon>
        <taxon>Alphaproteobacteria</taxon>
        <taxon>Rickettsiales</taxon>
        <taxon>Rickettsiaceae</taxon>
        <taxon>Rickettsieae</taxon>
        <taxon>Rickettsia</taxon>
        <taxon>belli group</taxon>
    </lineage>
</organism>
<protein>
    <recommendedName>
        <fullName>5-aminolevulinate synthase</fullName>
        <ecNumber>2.3.1.37</ecNumber>
    </recommendedName>
    <alternativeName>
        <fullName>5-aminolevulinic acid synthase</fullName>
    </alternativeName>
    <alternativeName>
        <fullName>Delta-ALA synthase</fullName>
    </alternativeName>
    <alternativeName>
        <fullName>Delta-aminolevulinate synthase</fullName>
    </alternativeName>
</protein>
<feature type="chain" id="PRO_0000280896" description="5-aminolevulinate synthase">
    <location>
        <begin position="1"/>
        <end position="414"/>
    </location>
</feature>
<feature type="active site" evidence="1">
    <location>
        <position position="244"/>
    </location>
</feature>
<feature type="binding site" evidence="1">
    <location>
        <position position="22"/>
    </location>
    <ligand>
        <name>substrate</name>
    </ligand>
</feature>
<feature type="binding site" evidence="1">
    <location>
        <position position="133"/>
    </location>
    <ligand>
        <name>substrate</name>
    </ligand>
</feature>
<feature type="binding site" evidence="1">
    <location>
        <position position="152"/>
    </location>
    <ligand>
        <name>substrate</name>
    </ligand>
</feature>
<feature type="binding site" description="in other chain" evidence="1">
    <location>
        <position position="185"/>
    </location>
    <ligand>
        <name>pyridoxal 5'-phosphate</name>
        <dbReference type="ChEBI" id="CHEBI:597326"/>
        <note>ligand shared between dimeric partners</note>
    </ligand>
</feature>
<feature type="binding site" description="in other chain" evidence="1">
    <location>
        <position position="213"/>
    </location>
    <ligand>
        <name>pyridoxal 5'-phosphate</name>
        <dbReference type="ChEBI" id="CHEBI:597326"/>
        <note>ligand shared between dimeric partners</note>
    </ligand>
</feature>
<feature type="binding site" description="in other chain" evidence="1">
    <location>
        <position position="241"/>
    </location>
    <ligand>
        <name>pyridoxal 5'-phosphate</name>
        <dbReference type="ChEBI" id="CHEBI:597326"/>
        <note>ligand shared between dimeric partners</note>
    </ligand>
</feature>
<feature type="binding site" evidence="1">
    <location>
        <position position="273"/>
    </location>
    <ligand>
        <name>pyridoxal 5'-phosphate</name>
        <dbReference type="ChEBI" id="CHEBI:597326"/>
        <note>ligand shared between dimeric partners</note>
    </ligand>
</feature>
<feature type="binding site" evidence="1">
    <location>
        <position position="274"/>
    </location>
    <ligand>
        <name>pyridoxal 5'-phosphate</name>
        <dbReference type="ChEBI" id="CHEBI:597326"/>
        <note>ligand shared between dimeric partners</note>
    </ligand>
</feature>
<feature type="binding site" evidence="1">
    <location>
        <position position="359"/>
    </location>
    <ligand>
        <name>substrate</name>
    </ligand>
</feature>
<feature type="modified residue" description="N6-(pyridoxal phosphate)lysine" evidence="1">
    <location>
        <position position="244"/>
    </location>
</feature>
<evidence type="ECO:0000250" key="1">
    <source>
        <dbReference type="UniProtKB" id="P18079"/>
    </source>
</evidence>
<evidence type="ECO:0000305" key="2"/>
<accession>Q1RIV2</accession>
<reference key="1">
    <citation type="journal article" date="2006" name="PLoS Genet.">
        <title>Genome sequence of Rickettsia bellii illuminates the role of amoebae in gene exchanges between intracellular pathogens.</title>
        <authorList>
            <person name="Ogata H."/>
            <person name="La Scola B."/>
            <person name="Audic S."/>
            <person name="Renesto P."/>
            <person name="Blanc G."/>
            <person name="Robert C."/>
            <person name="Fournier P.-E."/>
            <person name="Claverie J.-M."/>
            <person name="Raoult D."/>
        </authorList>
    </citation>
    <scope>NUCLEOTIDE SEQUENCE [LARGE SCALE GENOMIC DNA]</scope>
    <source>
        <strain>RML369-C</strain>
    </source>
</reference>
<gene>
    <name type="primary">hemA</name>
    <name type="ordered locus">RBE_0631</name>
</gene>
<sequence length="414" mass="45964">MSYYDTIFSDHIDKIKSEGRYREFKALKRQADNFPFAMCDDKQIVMWCINDYLGMSKHPKVVQASIDAVLKYGVGSGGTRNIGGNNVAILELEQELASLHNKEASLVFTSGFVANDTTLATLAKIMPNIVFFSDELNHASIIAGITGSKAEKHIYRHLDVKHLEELLQSVDINRPKIIVFESAYSMDGFFSPVKDIINLAKKYNALTFIDEVHTVGLYGKTGAGIAELLDCSDEIDIIQGTLAKAYGTIGGYITANHSLIDAIRLSASGFIFTTSLPPVISTAATHSIRHLKESNQERKTHQQVVSKLKSSFDRFNIPYLKNESHIVPIIIGDPIKASKASNMLLNEYSIYVQHINFPTVPRGTERLRIIPTPAHTDEMINDLSIALVQIFAALNIELSSTKELNDEIYLNLIA</sequence>
<name>HEM1_RICBR</name>
<comment type="catalytic activity">
    <reaction>
        <text>succinyl-CoA + glycine + H(+) = 5-aminolevulinate + CO2 + CoA</text>
        <dbReference type="Rhea" id="RHEA:12921"/>
        <dbReference type="ChEBI" id="CHEBI:15378"/>
        <dbReference type="ChEBI" id="CHEBI:16526"/>
        <dbReference type="ChEBI" id="CHEBI:57287"/>
        <dbReference type="ChEBI" id="CHEBI:57292"/>
        <dbReference type="ChEBI" id="CHEBI:57305"/>
        <dbReference type="ChEBI" id="CHEBI:356416"/>
        <dbReference type="EC" id="2.3.1.37"/>
    </reaction>
</comment>
<comment type="cofactor">
    <cofactor evidence="1">
        <name>pyridoxal 5'-phosphate</name>
        <dbReference type="ChEBI" id="CHEBI:597326"/>
    </cofactor>
</comment>
<comment type="pathway">
    <text>Porphyrin-containing compound metabolism; protoporphyrin-IX biosynthesis; 5-aminolevulinate from glycine: step 1/1.</text>
</comment>
<comment type="subunit">
    <text evidence="1">Homodimer.</text>
</comment>
<comment type="similarity">
    <text evidence="2">Belongs to the class-II pyridoxal-phosphate-dependent aminotransferase family.</text>
</comment>
<proteinExistence type="inferred from homology"/>
<keyword id="KW-0012">Acyltransferase</keyword>
<keyword id="KW-0350">Heme biosynthesis</keyword>
<keyword id="KW-0663">Pyridoxal phosphate</keyword>
<keyword id="KW-0808">Transferase</keyword>